<keyword id="KW-0963">Cytoplasm</keyword>
<keyword id="KW-0342">GTP-binding</keyword>
<keyword id="KW-0547">Nucleotide-binding</keyword>
<keyword id="KW-0597">Phosphoprotein</keyword>
<keyword id="KW-1185">Reference proteome</keyword>
<evidence type="ECO:0000250" key="1"/>
<evidence type="ECO:0000250" key="2">
    <source>
        <dbReference type="UniProtKB" id="D2XV59"/>
    </source>
</evidence>
<evidence type="ECO:0000250" key="3">
    <source>
        <dbReference type="UniProtKB" id="O00178"/>
    </source>
</evidence>
<evidence type="ECO:0000255" key="4"/>
<evidence type="ECO:0000255" key="5">
    <source>
        <dbReference type="PROSITE-ProRule" id="PRU01059"/>
    </source>
</evidence>
<evidence type="ECO:0000256" key="6">
    <source>
        <dbReference type="SAM" id="MobiDB-lite"/>
    </source>
</evidence>
<evidence type="ECO:0000305" key="7"/>
<gene>
    <name type="primary">GTPBP1</name>
</gene>
<feature type="chain" id="PRO_0000122471" description="GTP-binding protein 1">
    <location>
        <begin position="1" status="less than"/>
        <end position="602"/>
    </location>
</feature>
<feature type="domain" description="tr-type G" evidence="5">
    <location>
        <begin position="91"/>
        <end position="322"/>
    </location>
</feature>
<feature type="region of interest" description="G1" evidence="5">
    <location>
        <begin position="100"/>
        <end position="107"/>
    </location>
</feature>
<feature type="region of interest" description="G2" evidence="5">
    <location>
        <begin position="139"/>
        <end position="143"/>
    </location>
</feature>
<feature type="region of interest" description="G3" evidence="5">
    <location>
        <begin position="185"/>
        <end position="188"/>
    </location>
</feature>
<feature type="region of interest" description="G4" evidence="5">
    <location>
        <begin position="241"/>
        <end position="244"/>
    </location>
</feature>
<feature type="region of interest" description="G5" evidence="5">
    <location>
        <begin position="299"/>
        <end position="301"/>
    </location>
</feature>
<feature type="region of interest" description="Disordered" evidence="6">
    <location>
        <begin position="506"/>
        <end position="602"/>
    </location>
</feature>
<feature type="compositionally biased region" description="Polar residues" evidence="6">
    <location>
        <begin position="506"/>
        <end position="528"/>
    </location>
</feature>
<feature type="compositionally biased region" description="Basic residues" evidence="6">
    <location>
        <begin position="579"/>
        <end position="589"/>
    </location>
</feature>
<feature type="binding site" evidence="4">
    <location>
        <begin position="100"/>
        <end position="107"/>
    </location>
    <ligand>
        <name>GTP</name>
        <dbReference type="ChEBI" id="CHEBI:37565"/>
    </ligand>
</feature>
<feature type="binding site" evidence="4">
    <location>
        <begin position="185"/>
        <end position="189"/>
    </location>
    <ligand>
        <name>GTP</name>
        <dbReference type="ChEBI" id="CHEBI:37565"/>
    </ligand>
</feature>
<feature type="binding site" evidence="4">
    <location>
        <begin position="241"/>
        <end position="244"/>
    </location>
    <ligand>
        <name>GTP</name>
        <dbReference type="ChEBI" id="CHEBI:37565"/>
    </ligand>
</feature>
<feature type="modified residue" description="Phosphoserine" evidence="3">
    <location>
        <position position="2"/>
    </location>
</feature>
<feature type="modified residue" description="Phosphoserine" evidence="3">
    <location>
        <position position="513"/>
    </location>
</feature>
<feature type="non-terminal residue">
    <location>
        <position position="1"/>
    </location>
</feature>
<accession>Q5R8Q7</accession>
<protein>
    <recommendedName>
        <fullName>GTP-binding protein 1</fullName>
    </recommendedName>
</protein>
<dbReference type="EMBL" id="CR859694">
    <property type="protein sequence ID" value="CAH91853.1"/>
    <property type="status" value="ALT_INIT"/>
    <property type="molecule type" value="mRNA"/>
</dbReference>
<dbReference type="RefSeq" id="NP_001126073.1">
    <property type="nucleotide sequence ID" value="NM_001132601.1"/>
</dbReference>
<dbReference type="SMR" id="Q5R8Q7"/>
<dbReference type="FunCoup" id="Q5R8Q7">
    <property type="interactions" value="1856"/>
</dbReference>
<dbReference type="STRING" id="9601.ENSPPYP00000013193"/>
<dbReference type="GeneID" id="100173025"/>
<dbReference type="KEGG" id="pon:100173025"/>
<dbReference type="CTD" id="9567"/>
<dbReference type="eggNOG" id="KOG0463">
    <property type="taxonomic scope" value="Eukaryota"/>
</dbReference>
<dbReference type="InParanoid" id="Q5R8Q7"/>
<dbReference type="OrthoDB" id="248233at2759"/>
<dbReference type="Proteomes" id="UP000001595">
    <property type="component" value="Unplaced"/>
</dbReference>
<dbReference type="GO" id="GO:0000177">
    <property type="term" value="C:cytoplasmic exosome (RNase complex)"/>
    <property type="evidence" value="ECO:0000250"/>
    <property type="project" value="UniProtKB"/>
</dbReference>
<dbReference type="GO" id="GO:0005829">
    <property type="term" value="C:cytosol"/>
    <property type="evidence" value="ECO:0000250"/>
    <property type="project" value="UniProtKB"/>
</dbReference>
<dbReference type="GO" id="GO:0005525">
    <property type="term" value="F:GTP binding"/>
    <property type="evidence" value="ECO:0007669"/>
    <property type="project" value="UniProtKB-KW"/>
</dbReference>
<dbReference type="GO" id="GO:0003924">
    <property type="term" value="F:GTPase activity"/>
    <property type="evidence" value="ECO:0000250"/>
    <property type="project" value="UniProtKB"/>
</dbReference>
<dbReference type="GO" id="GO:0003746">
    <property type="term" value="F:translation elongation factor activity"/>
    <property type="evidence" value="ECO:0007669"/>
    <property type="project" value="TreeGrafter"/>
</dbReference>
<dbReference type="GO" id="GO:0046039">
    <property type="term" value="P:GTP metabolic process"/>
    <property type="evidence" value="ECO:0000250"/>
    <property type="project" value="UniProtKB"/>
</dbReference>
<dbReference type="GO" id="GO:0061014">
    <property type="term" value="P:positive regulation of mRNA catabolic process"/>
    <property type="evidence" value="ECO:0000250"/>
    <property type="project" value="UniProtKB"/>
</dbReference>
<dbReference type="CDD" id="cd04165">
    <property type="entry name" value="GTPBP1_like"/>
    <property type="match status" value="1"/>
</dbReference>
<dbReference type="CDD" id="cd03694">
    <property type="entry name" value="GTPBP_II"/>
    <property type="match status" value="1"/>
</dbReference>
<dbReference type="CDD" id="cd03708">
    <property type="entry name" value="GTPBP_III"/>
    <property type="match status" value="1"/>
</dbReference>
<dbReference type="FunFam" id="2.40.30.10:FF:000028">
    <property type="entry name" value="GTP-binding protein 1,-like"/>
    <property type="match status" value="1"/>
</dbReference>
<dbReference type="FunFam" id="2.40.30.10:FF:000014">
    <property type="entry name" value="Probable GTP-binding protein 1"/>
    <property type="match status" value="1"/>
</dbReference>
<dbReference type="FunFam" id="3.40.50.300:FF:000091">
    <property type="entry name" value="Probable GTP-binding protein 1"/>
    <property type="match status" value="1"/>
</dbReference>
<dbReference type="Gene3D" id="3.40.50.300">
    <property type="entry name" value="P-loop containing nucleotide triphosphate hydrolases"/>
    <property type="match status" value="1"/>
</dbReference>
<dbReference type="Gene3D" id="2.40.30.10">
    <property type="entry name" value="Translation factors"/>
    <property type="match status" value="2"/>
</dbReference>
<dbReference type="InterPro" id="IPR050055">
    <property type="entry name" value="EF-Tu_GTPase"/>
</dbReference>
<dbReference type="InterPro" id="IPR004161">
    <property type="entry name" value="EFTu-like_2"/>
</dbReference>
<dbReference type="InterPro" id="IPR035531">
    <property type="entry name" value="GTPBP1-like"/>
</dbReference>
<dbReference type="InterPro" id="IPR027417">
    <property type="entry name" value="P-loop_NTPase"/>
</dbReference>
<dbReference type="InterPro" id="IPR000795">
    <property type="entry name" value="T_Tr_GTP-bd_dom"/>
</dbReference>
<dbReference type="InterPro" id="IPR009000">
    <property type="entry name" value="Transl_B-barrel_sf"/>
</dbReference>
<dbReference type="InterPro" id="IPR009001">
    <property type="entry name" value="Transl_elong_EF1A/Init_IF2_C"/>
</dbReference>
<dbReference type="PANTHER" id="PTHR43721">
    <property type="entry name" value="ELONGATION FACTOR TU-RELATED"/>
    <property type="match status" value="1"/>
</dbReference>
<dbReference type="PANTHER" id="PTHR43721:SF9">
    <property type="entry name" value="GTP-BINDING PROTEIN 1"/>
    <property type="match status" value="1"/>
</dbReference>
<dbReference type="Pfam" id="PF00009">
    <property type="entry name" value="GTP_EFTU"/>
    <property type="match status" value="1"/>
</dbReference>
<dbReference type="Pfam" id="PF03144">
    <property type="entry name" value="GTP_EFTU_D2"/>
    <property type="match status" value="1"/>
</dbReference>
<dbReference type="SUPFAM" id="SSF50465">
    <property type="entry name" value="EF-Tu/eEF-1alpha/eIF2-gamma C-terminal domain"/>
    <property type="match status" value="1"/>
</dbReference>
<dbReference type="SUPFAM" id="SSF52540">
    <property type="entry name" value="P-loop containing nucleoside triphosphate hydrolases"/>
    <property type="match status" value="1"/>
</dbReference>
<dbReference type="SUPFAM" id="SSF50447">
    <property type="entry name" value="Translation proteins"/>
    <property type="match status" value="1"/>
</dbReference>
<dbReference type="PROSITE" id="PS51722">
    <property type="entry name" value="G_TR_2"/>
    <property type="match status" value="1"/>
</dbReference>
<comment type="function">
    <text evidence="2">Promotes degradation of target mRNA species. Plays a role in the regulation of circadian mRNA stability. Binds GTP and has GTPase activity (By similarity).</text>
</comment>
<comment type="subunit">
    <text evidence="1">Interacts with EXOSC2/RRP4, EXOSC3/RRP40, EXOSC5/RRP46, HNRNPD, HNRNPR and SYNCRIP. Identified in a complex with AANAT mRNA, but does not bind mRNA by itself (By similarity).</text>
</comment>
<comment type="subcellular location">
    <subcellularLocation>
        <location evidence="1">Cytoplasm</location>
    </subcellularLocation>
</comment>
<comment type="similarity">
    <text evidence="5">Belongs to the TRAFAC class translation factor GTPase superfamily. Classic translation factor GTPase family. GTPBP1 subfamily.</text>
</comment>
<comment type="sequence caution" evidence="7">
    <conflict type="erroneous initiation">
        <sequence resource="EMBL-CDS" id="CAH91853"/>
    </conflict>
    <text>Truncated N-terminus.</text>
</comment>
<sequence>VSPTSEQYDSLLRQMWERMDEGCGGTIYVIGQGSDGTEYGLSEADMEASYATVKSMAEQIEADVILLRERQEAGGRVRDYLVRKRVGDNDFLEVRVAVVGNVDAGKSTLLGVLTHGELDNGRGFARQKLFRHKHEIESGRTSSVGNDILGFDSEGNVVNKPDSHGGSLEWTKICEKSTKVITFIDLAGHEKYLKTTVFGMTGHLPDFCMLMVGSNAGIVGMTKEHLGLALALNVPVFVVVTKIDMCPANILQETLKLLQRLLKSPGCRKIPVLVQSKDDVIVTASNFSSERMCPIFQISNVTGENLDLLKMFLNLLSPRTSYREEEPAEFQIDDTYSVPGVGTVVSGTTLRGLIKLNDTLLLGPDPLGNFLSIAVKSIHRKRMPVKEVRGGQTASFALKKIKRSSIRKGMVMVSPRLNPQASWEFEAEILVLHHPTTISPRYQAMVHCGSIRQTATILSMDKDCLRTGDKATVHFRFIKTPEYLHIDQRLVFREGRTKAVGTITKLLQTTNNSPMNSKPQQIKMQSTKKGPLTKRDEGGPSGGPAVGAPPPGDEASSLGAGQPAASCNLQPQPKPSSGGRRRGGQRYKVKSQGACVTPASGC</sequence>
<organism>
    <name type="scientific">Pongo abelii</name>
    <name type="common">Sumatran orangutan</name>
    <name type="synonym">Pongo pygmaeus abelii</name>
    <dbReference type="NCBI Taxonomy" id="9601"/>
    <lineage>
        <taxon>Eukaryota</taxon>
        <taxon>Metazoa</taxon>
        <taxon>Chordata</taxon>
        <taxon>Craniata</taxon>
        <taxon>Vertebrata</taxon>
        <taxon>Euteleostomi</taxon>
        <taxon>Mammalia</taxon>
        <taxon>Eutheria</taxon>
        <taxon>Euarchontoglires</taxon>
        <taxon>Primates</taxon>
        <taxon>Haplorrhini</taxon>
        <taxon>Catarrhini</taxon>
        <taxon>Hominidae</taxon>
        <taxon>Pongo</taxon>
    </lineage>
</organism>
<name>GTPB1_PONAB</name>
<proteinExistence type="evidence at transcript level"/>
<reference key="1">
    <citation type="submission" date="2004-11" db="EMBL/GenBank/DDBJ databases">
        <authorList>
            <consortium name="The German cDNA consortium"/>
        </authorList>
    </citation>
    <scope>NUCLEOTIDE SEQUENCE [LARGE SCALE MRNA]</scope>
    <source>
        <tissue>Heart</tissue>
    </source>
</reference>